<keyword id="KW-0004">4Fe-4S</keyword>
<keyword id="KW-0963">Cytoplasm</keyword>
<keyword id="KW-0408">Iron</keyword>
<keyword id="KW-0411">Iron-sulfur</keyword>
<keyword id="KW-0479">Metal-binding</keyword>
<keyword id="KW-0662">Pyridine nucleotide biosynthesis</keyword>
<keyword id="KW-0808">Transferase</keyword>
<comment type="function">
    <text evidence="1">Catalyzes the condensation of iminoaspartate with dihydroxyacetone phosphate to form quinolinate.</text>
</comment>
<comment type="catalytic activity">
    <reaction evidence="1">
        <text>iminosuccinate + dihydroxyacetone phosphate = quinolinate + phosphate + 2 H2O + H(+)</text>
        <dbReference type="Rhea" id="RHEA:25888"/>
        <dbReference type="ChEBI" id="CHEBI:15377"/>
        <dbReference type="ChEBI" id="CHEBI:15378"/>
        <dbReference type="ChEBI" id="CHEBI:29959"/>
        <dbReference type="ChEBI" id="CHEBI:43474"/>
        <dbReference type="ChEBI" id="CHEBI:57642"/>
        <dbReference type="ChEBI" id="CHEBI:77875"/>
        <dbReference type="EC" id="2.5.1.72"/>
    </reaction>
    <physiologicalReaction direction="left-to-right" evidence="1">
        <dbReference type="Rhea" id="RHEA:25889"/>
    </physiologicalReaction>
</comment>
<comment type="cofactor">
    <cofactor evidence="1">
        <name>[4Fe-4S] cluster</name>
        <dbReference type="ChEBI" id="CHEBI:49883"/>
    </cofactor>
    <text evidence="1">Binds 1 [4Fe-4S] cluster per subunit.</text>
</comment>
<comment type="pathway">
    <text evidence="1">Cofactor biosynthesis; NAD(+) biosynthesis; quinolinate from iminoaspartate: step 1/1.</text>
</comment>
<comment type="subcellular location">
    <subcellularLocation>
        <location evidence="1">Cytoplasm</location>
    </subcellularLocation>
</comment>
<comment type="similarity">
    <text evidence="1">Belongs to the quinolinate synthase family. Type 3 subfamily.</text>
</comment>
<feature type="chain" id="PRO_1000129455" description="Quinolinate synthase">
    <location>
        <begin position="1"/>
        <end position="368"/>
    </location>
</feature>
<feature type="binding site" evidence="1">
    <location>
        <position position="46"/>
    </location>
    <ligand>
        <name>iminosuccinate</name>
        <dbReference type="ChEBI" id="CHEBI:77875"/>
    </ligand>
</feature>
<feature type="binding site" evidence="1">
    <location>
        <position position="63"/>
    </location>
    <ligand>
        <name>iminosuccinate</name>
        <dbReference type="ChEBI" id="CHEBI:77875"/>
    </ligand>
</feature>
<feature type="binding site" evidence="1">
    <location>
        <position position="110"/>
    </location>
    <ligand>
        <name>[4Fe-4S] cluster</name>
        <dbReference type="ChEBI" id="CHEBI:49883"/>
    </ligand>
</feature>
<feature type="binding site" evidence="1">
    <location>
        <begin position="141"/>
        <end position="143"/>
    </location>
    <ligand>
        <name>iminosuccinate</name>
        <dbReference type="ChEBI" id="CHEBI:77875"/>
    </ligand>
</feature>
<feature type="binding site" evidence="1">
    <location>
        <position position="162"/>
    </location>
    <ligand>
        <name>iminosuccinate</name>
        <dbReference type="ChEBI" id="CHEBI:77875"/>
    </ligand>
</feature>
<feature type="binding site" evidence="1">
    <location>
        <position position="230"/>
    </location>
    <ligand>
        <name>[4Fe-4S] cluster</name>
        <dbReference type="ChEBI" id="CHEBI:49883"/>
    </ligand>
</feature>
<feature type="binding site" evidence="1">
    <location>
        <begin position="256"/>
        <end position="258"/>
    </location>
    <ligand>
        <name>iminosuccinate</name>
        <dbReference type="ChEBI" id="CHEBI:77875"/>
    </ligand>
</feature>
<feature type="binding site" evidence="1">
    <location>
        <position position="273"/>
    </location>
    <ligand>
        <name>iminosuccinate</name>
        <dbReference type="ChEBI" id="CHEBI:77875"/>
    </ligand>
</feature>
<feature type="binding site" evidence="1">
    <location>
        <position position="320"/>
    </location>
    <ligand>
        <name>[4Fe-4S] cluster</name>
        <dbReference type="ChEBI" id="CHEBI:49883"/>
    </ligand>
</feature>
<accession>A9VIQ3</accession>
<gene>
    <name evidence="1" type="primary">nadA</name>
    <name type="ordered locus">BcerKBAB4_4274</name>
</gene>
<evidence type="ECO:0000255" key="1">
    <source>
        <dbReference type="HAMAP-Rule" id="MF_00569"/>
    </source>
</evidence>
<dbReference type="EC" id="2.5.1.72" evidence="1"/>
<dbReference type="EMBL" id="CP000903">
    <property type="protein sequence ID" value="ABY45433.1"/>
    <property type="molecule type" value="Genomic_DNA"/>
</dbReference>
<dbReference type="RefSeq" id="WP_002192476.1">
    <property type="nucleotide sequence ID" value="NC_010184.1"/>
</dbReference>
<dbReference type="SMR" id="A9VIQ3"/>
<dbReference type="KEGG" id="bwe:BcerKBAB4_4274"/>
<dbReference type="eggNOG" id="COG0379">
    <property type="taxonomic scope" value="Bacteria"/>
</dbReference>
<dbReference type="HOGENOM" id="CLU_047382_2_0_9"/>
<dbReference type="UniPathway" id="UPA00253">
    <property type="reaction ID" value="UER00327"/>
</dbReference>
<dbReference type="Proteomes" id="UP000002154">
    <property type="component" value="Chromosome"/>
</dbReference>
<dbReference type="GO" id="GO:0005829">
    <property type="term" value="C:cytosol"/>
    <property type="evidence" value="ECO:0007669"/>
    <property type="project" value="TreeGrafter"/>
</dbReference>
<dbReference type="GO" id="GO:0051539">
    <property type="term" value="F:4 iron, 4 sulfur cluster binding"/>
    <property type="evidence" value="ECO:0007669"/>
    <property type="project" value="UniProtKB-KW"/>
</dbReference>
<dbReference type="GO" id="GO:0046872">
    <property type="term" value="F:metal ion binding"/>
    <property type="evidence" value="ECO:0007669"/>
    <property type="project" value="UniProtKB-KW"/>
</dbReference>
<dbReference type="GO" id="GO:0008987">
    <property type="term" value="F:quinolinate synthetase A activity"/>
    <property type="evidence" value="ECO:0007669"/>
    <property type="project" value="UniProtKB-UniRule"/>
</dbReference>
<dbReference type="GO" id="GO:0034628">
    <property type="term" value="P:'de novo' NAD biosynthetic process from L-aspartate"/>
    <property type="evidence" value="ECO:0007669"/>
    <property type="project" value="TreeGrafter"/>
</dbReference>
<dbReference type="FunFam" id="3.40.50.10800:FF:000001">
    <property type="entry name" value="Quinolinate synthase A"/>
    <property type="match status" value="1"/>
</dbReference>
<dbReference type="Gene3D" id="3.40.50.10800">
    <property type="entry name" value="NadA-like"/>
    <property type="match status" value="3"/>
</dbReference>
<dbReference type="HAMAP" id="MF_00569">
    <property type="entry name" value="NadA_type3"/>
    <property type="match status" value="1"/>
</dbReference>
<dbReference type="InterPro" id="IPR003473">
    <property type="entry name" value="NadA"/>
</dbReference>
<dbReference type="InterPro" id="IPR036094">
    <property type="entry name" value="NadA_sf"/>
</dbReference>
<dbReference type="InterPro" id="IPR023515">
    <property type="entry name" value="Quinolinate_synth_A_type3"/>
</dbReference>
<dbReference type="NCBIfam" id="TIGR00550">
    <property type="entry name" value="nadA"/>
    <property type="match status" value="1"/>
</dbReference>
<dbReference type="NCBIfam" id="NF006880">
    <property type="entry name" value="PRK09375.2-1"/>
    <property type="match status" value="1"/>
</dbReference>
<dbReference type="NCBIfam" id="NF006883">
    <property type="entry name" value="PRK09375.2-4"/>
    <property type="match status" value="1"/>
</dbReference>
<dbReference type="PANTHER" id="PTHR30573:SF0">
    <property type="entry name" value="QUINOLINATE SYNTHASE, CHLOROPLASTIC"/>
    <property type="match status" value="1"/>
</dbReference>
<dbReference type="PANTHER" id="PTHR30573">
    <property type="entry name" value="QUINOLINATE SYNTHETASE A"/>
    <property type="match status" value="1"/>
</dbReference>
<dbReference type="Pfam" id="PF02445">
    <property type="entry name" value="NadA"/>
    <property type="match status" value="1"/>
</dbReference>
<dbReference type="SUPFAM" id="SSF142754">
    <property type="entry name" value="NadA-like"/>
    <property type="match status" value="1"/>
</dbReference>
<organism>
    <name type="scientific">Bacillus mycoides (strain KBAB4)</name>
    <name type="common">Bacillus weihenstephanensis</name>
    <dbReference type="NCBI Taxonomy" id="315730"/>
    <lineage>
        <taxon>Bacteria</taxon>
        <taxon>Bacillati</taxon>
        <taxon>Bacillota</taxon>
        <taxon>Bacilli</taxon>
        <taxon>Bacillales</taxon>
        <taxon>Bacillaceae</taxon>
        <taxon>Bacillus</taxon>
        <taxon>Bacillus cereus group</taxon>
    </lineage>
</organism>
<protein>
    <recommendedName>
        <fullName evidence="1">Quinolinate synthase</fullName>
        <ecNumber evidence="1">2.5.1.72</ecNumber>
    </recommendedName>
</protein>
<name>NADA_BACMK</name>
<reference key="1">
    <citation type="journal article" date="2008" name="Chem. Biol. Interact.">
        <title>Extending the Bacillus cereus group genomics to putative food-borne pathogens of different toxicity.</title>
        <authorList>
            <person name="Lapidus A."/>
            <person name="Goltsman E."/>
            <person name="Auger S."/>
            <person name="Galleron N."/>
            <person name="Segurens B."/>
            <person name="Dossat C."/>
            <person name="Land M.L."/>
            <person name="Broussolle V."/>
            <person name="Brillard J."/>
            <person name="Guinebretiere M.-H."/>
            <person name="Sanchis V."/>
            <person name="Nguen-the C."/>
            <person name="Lereclus D."/>
            <person name="Richardson P."/>
            <person name="Wincker P."/>
            <person name="Weissenbach J."/>
            <person name="Ehrlich S.D."/>
            <person name="Sorokin A."/>
        </authorList>
    </citation>
    <scope>NUCLEOTIDE SEQUENCE [LARGE SCALE GENOMIC DNA]</scope>
    <source>
        <strain>KBAB4</strain>
    </source>
</reference>
<proteinExistence type="inferred from homology"/>
<sequence length="368" mass="41610">MGILEKVQPIEVMLPERYQTMSILEMEERVREIKEKMGALLFIPGHHYQKDEVVQFSDAAGDSLQLAQVAANNKEAKYIVFCGVHFMAETADMLTTDDQIVILPDMRAGCSMADMADIEQTERAWKELAKLFGDTMIPLTYVNSTAAIKAFCGRNGGATVTSSNAKQMVSWAFTQKERLVFLPDQHLGRNTAYDLGIPLEKMAVWNPHTDSLEYDGDIEEIQVILWKGHCSVHQNFTVKNIENVRKNHPDMNIIVHPECCYEVVAASDYAGSTKYIIDMIEAAPAGSKWAIGTEMNLVNRIIQQHPDKEIISLNPFMCPCLTMNRIDLPHLLWALENIERGEQINVIRVEKQVTEEAVLALNRMLERV</sequence>